<gene>
    <name evidence="1" type="primary">sucC</name>
    <name type="ordered locus">Cpar_1497</name>
</gene>
<name>SUCC_CHLP8</name>
<proteinExistence type="inferred from homology"/>
<keyword id="KW-0067">ATP-binding</keyword>
<keyword id="KW-0436">Ligase</keyword>
<keyword id="KW-0460">Magnesium</keyword>
<keyword id="KW-0479">Metal-binding</keyword>
<keyword id="KW-0547">Nucleotide-binding</keyword>
<keyword id="KW-0816">Tricarboxylic acid cycle</keyword>
<dbReference type="EC" id="6.2.1.5" evidence="1"/>
<dbReference type="EMBL" id="CP001099">
    <property type="protein sequence ID" value="ACF11895.1"/>
    <property type="molecule type" value="Genomic_DNA"/>
</dbReference>
<dbReference type="RefSeq" id="WP_012502728.1">
    <property type="nucleotide sequence ID" value="NC_011027.1"/>
</dbReference>
<dbReference type="SMR" id="B3QPP2"/>
<dbReference type="STRING" id="517417.Cpar_1497"/>
<dbReference type="KEGG" id="cpc:Cpar_1497"/>
<dbReference type="eggNOG" id="COG0045">
    <property type="taxonomic scope" value="Bacteria"/>
</dbReference>
<dbReference type="HOGENOM" id="CLU_037430_0_2_10"/>
<dbReference type="OrthoDB" id="9802602at2"/>
<dbReference type="UniPathway" id="UPA00223">
    <property type="reaction ID" value="UER00999"/>
</dbReference>
<dbReference type="Proteomes" id="UP000008811">
    <property type="component" value="Chromosome"/>
</dbReference>
<dbReference type="GO" id="GO:0005829">
    <property type="term" value="C:cytosol"/>
    <property type="evidence" value="ECO:0007669"/>
    <property type="project" value="TreeGrafter"/>
</dbReference>
<dbReference type="GO" id="GO:0042709">
    <property type="term" value="C:succinate-CoA ligase complex"/>
    <property type="evidence" value="ECO:0007669"/>
    <property type="project" value="TreeGrafter"/>
</dbReference>
<dbReference type="GO" id="GO:0005524">
    <property type="term" value="F:ATP binding"/>
    <property type="evidence" value="ECO:0007669"/>
    <property type="project" value="UniProtKB-UniRule"/>
</dbReference>
<dbReference type="GO" id="GO:0000287">
    <property type="term" value="F:magnesium ion binding"/>
    <property type="evidence" value="ECO:0007669"/>
    <property type="project" value="UniProtKB-UniRule"/>
</dbReference>
<dbReference type="GO" id="GO:0004775">
    <property type="term" value="F:succinate-CoA ligase (ADP-forming) activity"/>
    <property type="evidence" value="ECO:0007669"/>
    <property type="project" value="UniProtKB-UniRule"/>
</dbReference>
<dbReference type="GO" id="GO:0004776">
    <property type="term" value="F:succinate-CoA ligase (GDP-forming) activity"/>
    <property type="evidence" value="ECO:0007669"/>
    <property type="project" value="RHEA"/>
</dbReference>
<dbReference type="GO" id="GO:0006104">
    <property type="term" value="P:succinyl-CoA metabolic process"/>
    <property type="evidence" value="ECO:0007669"/>
    <property type="project" value="TreeGrafter"/>
</dbReference>
<dbReference type="GO" id="GO:0006099">
    <property type="term" value="P:tricarboxylic acid cycle"/>
    <property type="evidence" value="ECO:0007669"/>
    <property type="project" value="UniProtKB-UniRule"/>
</dbReference>
<dbReference type="FunFam" id="3.30.1490.20:FF:000002">
    <property type="entry name" value="Succinate--CoA ligase [ADP-forming] subunit beta"/>
    <property type="match status" value="1"/>
</dbReference>
<dbReference type="FunFam" id="3.30.470.20:FF:000002">
    <property type="entry name" value="Succinate--CoA ligase [ADP-forming] subunit beta"/>
    <property type="match status" value="1"/>
</dbReference>
<dbReference type="FunFam" id="3.40.50.261:FF:000001">
    <property type="entry name" value="Succinate--CoA ligase [ADP-forming] subunit beta"/>
    <property type="match status" value="1"/>
</dbReference>
<dbReference type="Gene3D" id="3.30.1490.20">
    <property type="entry name" value="ATP-grasp fold, A domain"/>
    <property type="match status" value="1"/>
</dbReference>
<dbReference type="Gene3D" id="3.30.470.20">
    <property type="entry name" value="ATP-grasp fold, B domain"/>
    <property type="match status" value="1"/>
</dbReference>
<dbReference type="Gene3D" id="3.40.50.261">
    <property type="entry name" value="Succinyl-CoA synthetase domains"/>
    <property type="match status" value="1"/>
</dbReference>
<dbReference type="HAMAP" id="MF_00558">
    <property type="entry name" value="Succ_CoA_beta"/>
    <property type="match status" value="1"/>
</dbReference>
<dbReference type="InterPro" id="IPR011761">
    <property type="entry name" value="ATP-grasp"/>
</dbReference>
<dbReference type="InterPro" id="IPR013650">
    <property type="entry name" value="ATP-grasp_succ-CoA_synth-type"/>
</dbReference>
<dbReference type="InterPro" id="IPR013815">
    <property type="entry name" value="ATP_grasp_subdomain_1"/>
</dbReference>
<dbReference type="InterPro" id="IPR017866">
    <property type="entry name" value="Succ-CoA_synthase_bsu_CS"/>
</dbReference>
<dbReference type="InterPro" id="IPR005811">
    <property type="entry name" value="SUCC_ACL_C"/>
</dbReference>
<dbReference type="InterPro" id="IPR005809">
    <property type="entry name" value="Succ_CoA_ligase-like_bsu"/>
</dbReference>
<dbReference type="InterPro" id="IPR016102">
    <property type="entry name" value="Succinyl-CoA_synth-like"/>
</dbReference>
<dbReference type="NCBIfam" id="NF001913">
    <property type="entry name" value="PRK00696.1"/>
    <property type="match status" value="1"/>
</dbReference>
<dbReference type="NCBIfam" id="TIGR01016">
    <property type="entry name" value="sucCoAbeta"/>
    <property type="match status" value="1"/>
</dbReference>
<dbReference type="PANTHER" id="PTHR11815:SF10">
    <property type="entry name" value="SUCCINATE--COA LIGASE [GDP-FORMING] SUBUNIT BETA, MITOCHONDRIAL"/>
    <property type="match status" value="1"/>
</dbReference>
<dbReference type="PANTHER" id="PTHR11815">
    <property type="entry name" value="SUCCINYL-COA SYNTHETASE BETA CHAIN"/>
    <property type="match status" value="1"/>
</dbReference>
<dbReference type="Pfam" id="PF08442">
    <property type="entry name" value="ATP-grasp_2"/>
    <property type="match status" value="1"/>
</dbReference>
<dbReference type="Pfam" id="PF00549">
    <property type="entry name" value="Ligase_CoA"/>
    <property type="match status" value="1"/>
</dbReference>
<dbReference type="PIRSF" id="PIRSF001554">
    <property type="entry name" value="SucCS_beta"/>
    <property type="match status" value="1"/>
</dbReference>
<dbReference type="SUPFAM" id="SSF56059">
    <property type="entry name" value="Glutathione synthetase ATP-binding domain-like"/>
    <property type="match status" value="1"/>
</dbReference>
<dbReference type="SUPFAM" id="SSF52210">
    <property type="entry name" value="Succinyl-CoA synthetase domains"/>
    <property type="match status" value="1"/>
</dbReference>
<dbReference type="PROSITE" id="PS50975">
    <property type="entry name" value="ATP_GRASP"/>
    <property type="match status" value="1"/>
</dbReference>
<dbReference type="PROSITE" id="PS01217">
    <property type="entry name" value="SUCCINYL_COA_LIG_3"/>
    <property type="match status" value="1"/>
</dbReference>
<reference key="1">
    <citation type="submission" date="2008-06" db="EMBL/GenBank/DDBJ databases">
        <title>Complete sequence of Chlorobaculum parvum NCIB 8327.</title>
        <authorList>
            <consortium name="US DOE Joint Genome Institute"/>
            <person name="Lucas S."/>
            <person name="Copeland A."/>
            <person name="Lapidus A."/>
            <person name="Glavina del Rio T."/>
            <person name="Dalin E."/>
            <person name="Tice H."/>
            <person name="Bruce D."/>
            <person name="Goodwin L."/>
            <person name="Pitluck S."/>
            <person name="Schmutz J."/>
            <person name="Larimer F."/>
            <person name="Land M."/>
            <person name="Hauser L."/>
            <person name="Kyrpides N."/>
            <person name="Mikhailova N."/>
            <person name="Zhao F."/>
            <person name="Li T."/>
            <person name="Liu Z."/>
            <person name="Overmann J."/>
            <person name="Bryant D.A."/>
            <person name="Richardson P."/>
        </authorList>
    </citation>
    <scope>NUCLEOTIDE SEQUENCE [LARGE SCALE GENOMIC DNA]</scope>
    <source>
        <strain>DSM 263 / NCIMB 8327</strain>
    </source>
</reference>
<feature type="chain" id="PRO_1000129171" description="Succinate--CoA ligase [ADP-forming] subunit beta">
    <location>
        <begin position="1"/>
        <end position="392"/>
    </location>
</feature>
<feature type="domain" description="ATP-grasp" evidence="1">
    <location>
        <begin position="9"/>
        <end position="248"/>
    </location>
</feature>
<feature type="binding site" evidence="1">
    <location>
        <position position="50"/>
    </location>
    <ligand>
        <name>ATP</name>
        <dbReference type="ChEBI" id="CHEBI:30616"/>
    </ligand>
</feature>
<feature type="binding site" evidence="1">
    <location>
        <begin position="57"/>
        <end position="59"/>
    </location>
    <ligand>
        <name>ATP</name>
        <dbReference type="ChEBI" id="CHEBI:30616"/>
    </ligand>
</feature>
<feature type="binding site" evidence="1">
    <location>
        <position position="103"/>
    </location>
    <ligand>
        <name>ATP</name>
        <dbReference type="ChEBI" id="CHEBI:30616"/>
    </ligand>
</feature>
<feature type="binding site" evidence="1">
    <location>
        <position position="106"/>
    </location>
    <ligand>
        <name>ATP</name>
        <dbReference type="ChEBI" id="CHEBI:30616"/>
    </ligand>
</feature>
<feature type="binding site" evidence="1">
    <location>
        <position position="111"/>
    </location>
    <ligand>
        <name>ATP</name>
        <dbReference type="ChEBI" id="CHEBI:30616"/>
    </ligand>
</feature>
<feature type="binding site" evidence="1">
    <location>
        <position position="203"/>
    </location>
    <ligand>
        <name>Mg(2+)</name>
        <dbReference type="ChEBI" id="CHEBI:18420"/>
    </ligand>
</feature>
<feature type="binding site" evidence="1">
    <location>
        <position position="217"/>
    </location>
    <ligand>
        <name>Mg(2+)</name>
        <dbReference type="ChEBI" id="CHEBI:18420"/>
    </ligand>
</feature>
<feature type="binding site" evidence="1">
    <location>
        <position position="268"/>
    </location>
    <ligand>
        <name>substrate</name>
        <note>ligand shared with subunit alpha</note>
    </ligand>
</feature>
<feature type="binding site" evidence="1">
    <location>
        <begin position="325"/>
        <end position="327"/>
    </location>
    <ligand>
        <name>substrate</name>
        <note>ligand shared with subunit alpha</note>
    </ligand>
</feature>
<sequence length="392" mass="42091">MNIHEYQGKGILKQFGVAVPKGIVAFSAEEAKQAAAELFEEQSSPVVVVKAQIHAGGRGKAGGVKLAKSPEEVYEIAQKMLGTTLVTHQTGPEGKEVRRLLIEEGMNIDKEFYLGITLDRATSCNVLMVSTEGGMEIEKVAEETPEKLLKIQVNPKYGLQGFQAREAALFLGMQGEQFRNGVKFIDALYKAYTTIDASLAEINPLVVTKEGRVLALDAKINFDDNAMYRHPDFHELRDITEEDPLEYEASKSNLNYVRLDGNVGCMVNGAGLAMGTMDLIQLAGGKPANFLDVGGGASPKTVEEGFKIILGDKNVKAILVNVFGGIVRCDRVAGGVIEAAKNIGLTVPVIVRLEGTNAKEAQKMLDESGLSLIAANGLRDAAEKVQKALASA</sequence>
<evidence type="ECO:0000255" key="1">
    <source>
        <dbReference type="HAMAP-Rule" id="MF_00558"/>
    </source>
</evidence>
<accession>B3QPP2</accession>
<protein>
    <recommendedName>
        <fullName evidence="1">Succinate--CoA ligase [ADP-forming] subunit beta</fullName>
        <ecNumber evidence="1">6.2.1.5</ecNumber>
    </recommendedName>
    <alternativeName>
        <fullName evidence="1">Succinyl-CoA synthetase subunit beta</fullName>
        <shortName evidence="1">SCS-beta</shortName>
    </alternativeName>
</protein>
<comment type="function">
    <text evidence="1">Succinyl-CoA synthetase functions in the citric acid cycle (TCA), coupling the hydrolysis of succinyl-CoA to the synthesis of either ATP or GTP and thus represents the only step of substrate-level phosphorylation in the TCA. The beta subunit provides nucleotide specificity of the enzyme and binds the substrate succinate, while the binding sites for coenzyme A and phosphate are found in the alpha subunit.</text>
</comment>
<comment type="catalytic activity">
    <reaction evidence="1">
        <text>succinate + ATP + CoA = succinyl-CoA + ADP + phosphate</text>
        <dbReference type="Rhea" id="RHEA:17661"/>
        <dbReference type="ChEBI" id="CHEBI:30031"/>
        <dbReference type="ChEBI" id="CHEBI:30616"/>
        <dbReference type="ChEBI" id="CHEBI:43474"/>
        <dbReference type="ChEBI" id="CHEBI:57287"/>
        <dbReference type="ChEBI" id="CHEBI:57292"/>
        <dbReference type="ChEBI" id="CHEBI:456216"/>
        <dbReference type="EC" id="6.2.1.5"/>
    </reaction>
    <physiologicalReaction direction="right-to-left" evidence="1">
        <dbReference type="Rhea" id="RHEA:17663"/>
    </physiologicalReaction>
</comment>
<comment type="catalytic activity">
    <reaction evidence="1">
        <text>GTP + succinate + CoA = succinyl-CoA + GDP + phosphate</text>
        <dbReference type="Rhea" id="RHEA:22120"/>
        <dbReference type="ChEBI" id="CHEBI:30031"/>
        <dbReference type="ChEBI" id="CHEBI:37565"/>
        <dbReference type="ChEBI" id="CHEBI:43474"/>
        <dbReference type="ChEBI" id="CHEBI:57287"/>
        <dbReference type="ChEBI" id="CHEBI:57292"/>
        <dbReference type="ChEBI" id="CHEBI:58189"/>
    </reaction>
    <physiologicalReaction direction="right-to-left" evidence="1">
        <dbReference type="Rhea" id="RHEA:22122"/>
    </physiologicalReaction>
</comment>
<comment type="cofactor">
    <cofactor evidence="1">
        <name>Mg(2+)</name>
        <dbReference type="ChEBI" id="CHEBI:18420"/>
    </cofactor>
    <text evidence="1">Binds 1 Mg(2+) ion per subunit.</text>
</comment>
<comment type="pathway">
    <text evidence="1">Carbohydrate metabolism; tricarboxylic acid cycle; succinate from succinyl-CoA (ligase route): step 1/1.</text>
</comment>
<comment type="subunit">
    <text evidence="1">Heterotetramer of two alpha and two beta subunits.</text>
</comment>
<comment type="similarity">
    <text evidence="1">Belongs to the succinate/malate CoA ligase beta subunit family.</text>
</comment>
<organism>
    <name type="scientific">Chlorobaculum parvum (strain DSM 263 / NCIMB 8327)</name>
    <name type="common">Chlorobium vibrioforme subsp. thiosulfatophilum</name>
    <dbReference type="NCBI Taxonomy" id="517417"/>
    <lineage>
        <taxon>Bacteria</taxon>
        <taxon>Pseudomonadati</taxon>
        <taxon>Chlorobiota</taxon>
        <taxon>Chlorobiia</taxon>
        <taxon>Chlorobiales</taxon>
        <taxon>Chlorobiaceae</taxon>
        <taxon>Chlorobaculum</taxon>
    </lineage>
</organism>